<keyword id="KW-0238">DNA-binding</keyword>
<keyword id="KW-1185">Reference proteome</keyword>
<keyword id="KW-0694">RNA-binding</keyword>
<protein>
    <recommendedName>
        <fullName>Heat shock protein 15 homolog</fullName>
        <shortName>HSP15</shortName>
    </recommendedName>
</protein>
<proteinExistence type="inferred from homology"/>
<name>HSLR_HAEIN</name>
<dbReference type="EMBL" id="L42023">
    <property type="protein sequence ID" value="AAC22220.1"/>
    <property type="molecule type" value="Genomic_DNA"/>
</dbReference>
<dbReference type="PIR" id="F64154">
    <property type="entry name" value="F64154"/>
</dbReference>
<dbReference type="RefSeq" id="NP_438719.1">
    <property type="nucleotide sequence ID" value="NC_000907.1"/>
</dbReference>
<dbReference type="SMR" id="P44754"/>
<dbReference type="STRING" id="71421.HI_0562"/>
<dbReference type="EnsemblBacteria" id="AAC22220">
    <property type="protein sequence ID" value="AAC22220"/>
    <property type="gene ID" value="HI_0562"/>
</dbReference>
<dbReference type="KEGG" id="hin:HI_0562"/>
<dbReference type="PATRIC" id="fig|71421.8.peg.582"/>
<dbReference type="eggNOG" id="COG1188">
    <property type="taxonomic scope" value="Bacteria"/>
</dbReference>
<dbReference type="HOGENOM" id="CLU_101003_2_1_6"/>
<dbReference type="OrthoDB" id="9797176at2"/>
<dbReference type="PhylomeDB" id="P44754"/>
<dbReference type="BioCyc" id="HINF71421:G1GJ1-574-MONOMER"/>
<dbReference type="Proteomes" id="UP000000579">
    <property type="component" value="Chromosome"/>
</dbReference>
<dbReference type="GO" id="GO:0003677">
    <property type="term" value="F:DNA binding"/>
    <property type="evidence" value="ECO:0007669"/>
    <property type="project" value="UniProtKB-KW"/>
</dbReference>
<dbReference type="GO" id="GO:0043023">
    <property type="term" value="F:ribosomal large subunit binding"/>
    <property type="evidence" value="ECO:0007669"/>
    <property type="project" value="InterPro"/>
</dbReference>
<dbReference type="GO" id="GO:0003727">
    <property type="term" value="F:single-stranded RNA binding"/>
    <property type="evidence" value="ECO:0007669"/>
    <property type="project" value="InterPro"/>
</dbReference>
<dbReference type="GO" id="GO:0034605">
    <property type="term" value="P:cellular response to heat"/>
    <property type="evidence" value="ECO:0007669"/>
    <property type="project" value="InterPro"/>
</dbReference>
<dbReference type="CDD" id="cd00165">
    <property type="entry name" value="S4"/>
    <property type="match status" value="1"/>
</dbReference>
<dbReference type="Gene3D" id="3.10.290.10">
    <property type="entry name" value="RNA-binding S4 domain"/>
    <property type="match status" value="1"/>
</dbReference>
<dbReference type="InterPro" id="IPR025708">
    <property type="entry name" value="HSP15"/>
</dbReference>
<dbReference type="InterPro" id="IPR002942">
    <property type="entry name" value="S4_RNA-bd"/>
</dbReference>
<dbReference type="InterPro" id="IPR036986">
    <property type="entry name" value="S4_RNA-bd_sf"/>
</dbReference>
<dbReference type="NCBIfam" id="NF007673">
    <property type="entry name" value="PRK10348.1"/>
    <property type="match status" value="1"/>
</dbReference>
<dbReference type="Pfam" id="PF01479">
    <property type="entry name" value="S4"/>
    <property type="match status" value="1"/>
</dbReference>
<dbReference type="PIRSF" id="PIRSF016821">
    <property type="entry name" value="HSP15"/>
    <property type="match status" value="1"/>
</dbReference>
<dbReference type="SMART" id="SM00363">
    <property type="entry name" value="S4"/>
    <property type="match status" value="1"/>
</dbReference>
<dbReference type="SUPFAM" id="SSF55174">
    <property type="entry name" value="Alpha-L RNA-binding motif"/>
    <property type="match status" value="1"/>
</dbReference>
<dbReference type="PROSITE" id="PS50889">
    <property type="entry name" value="S4"/>
    <property type="match status" value="1"/>
</dbReference>
<reference key="1">
    <citation type="journal article" date="1995" name="Science">
        <title>Whole-genome random sequencing and assembly of Haemophilus influenzae Rd.</title>
        <authorList>
            <person name="Fleischmann R.D."/>
            <person name="Adams M.D."/>
            <person name="White O."/>
            <person name="Clayton R.A."/>
            <person name="Kirkness E.F."/>
            <person name="Kerlavage A.R."/>
            <person name="Bult C.J."/>
            <person name="Tomb J.-F."/>
            <person name="Dougherty B.A."/>
            <person name="Merrick J.M."/>
            <person name="McKenney K."/>
            <person name="Sutton G.G."/>
            <person name="FitzHugh W."/>
            <person name="Fields C.A."/>
            <person name="Gocayne J.D."/>
            <person name="Scott J.D."/>
            <person name="Shirley R."/>
            <person name="Liu L.-I."/>
            <person name="Glodek A."/>
            <person name="Kelley J.M."/>
            <person name="Weidman J.F."/>
            <person name="Phillips C.A."/>
            <person name="Spriggs T."/>
            <person name="Hedblom E."/>
            <person name="Cotton M.D."/>
            <person name="Utterback T.R."/>
            <person name="Hanna M.C."/>
            <person name="Nguyen D.T."/>
            <person name="Saudek D.M."/>
            <person name="Brandon R.C."/>
            <person name="Fine L.D."/>
            <person name="Fritchman J.L."/>
            <person name="Fuhrmann J.L."/>
            <person name="Geoghagen N.S.M."/>
            <person name="Gnehm C.L."/>
            <person name="McDonald L.A."/>
            <person name="Small K.V."/>
            <person name="Fraser C.M."/>
            <person name="Smith H.O."/>
            <person name="Venter J.C."/>
        </authorList>
    </citation>
    <scope>NUCLEOTIDE SEQUENCE [LARGE SCALE GENOMIC DNA]</scope>
    <source>
        <strain>ATCC 51907 / DSM 11121 / KW20 / Rd</strain>
    </source>
</reference>
<sequence length="131" mass="15505">MAEKEVRLDKWLWAARFYKTRSIAKAMIESGKVHYNNQRAKVSKIVEVGAMLKLRQGNEEKEIKIIALSDQRRGAPEAQLLYQETESSVKKREEIAWARKNNSLSMPHPDRRPNKKERRDLLKFKHQDKFE</sequence>
<gene>
    <name type="primary">hslR</name>
    <name type="ordered locus">HI_0562</name>
</gene>
<comment type="function">
    <text evidence="1">Involved in the recycling of free 50S ribosomal subunits that still carry a nascent chain. Binds RNA more specifically than DNA. Binds with very high affinity to the free 50S ribosomal subunit. Does not bind it when it is part of the 70S ribosome (By similarity).</text>
</comment>
<comment type="similarity">
    <text evidence="4">Belongs to the HSP15 family.</text>
</comment>
<feature type="chain" id="PRO_0000201744" description="Heat shock protein 15 homolog">
    <location>
        <begin position="1"/>
        <end position="131"/>
    </location>
</feature>
<feature type="domain" description="S4 RNA-binding" evidence="2">
    <location>
        <begin position="6"/>
        <end position="67"/>
    </location>
</feature>
<feature type="region of interest" description="Disordered" evidence="3">
    <location>
        <begin position="98"/>
        <end position="131"/>
    </location>
</feature>
<feature type="compositionally biased region" description="Basic and acidic residues" evidence="3">
    <location>
        <begin position="108"/>
        <end position="131"/>
    </location>
</feature>
<organism>
    <name type="scientific">Haemophilus influenzae (strain ATCC 51907 / DSM 11121 / KW20 / Rd)</name>
    <dbReference type="NCBI Taxonomy" id="71421"/>
    <lineage>
        <taxon>Bacteria</taxon>
        <taxon>Pseudomonadati</taxon>
        <taxon>Pseudomonadota</taxon>
        <taxon>Gammaproteobacteria</taxon>
        <taxon>Pasteurellales</taxon>
        <taxon>Pasteurellaceae</taxon>
        <taxon>Haemophilus</taxon>
    </lineage>
</organism>
<evidence type="ECO:0000250" key="1"/>
<evidence type="ECO:0000255" key="2">
    <source>
        <dbReference type="PROSITE-ProRule" id="PRU00182"/>
    </source>
</evidence>
<evidence type="ECO:0000256" key="3">
    <source>
        <dbReference type="SAM" id="MobiDB-lite"/>
    </source>
</evidence>
<evidence type="ECO:0000305" key="4"/>
<accession>P44754</accession>